<sequence length="267" mass="29562">MKKVTIRDFIKKKSTKEKITMLTAYDYPTAKIISNTGLDSILVGDSLGMVVLGYANTLNVTMRDMISHTRAVARANPPQLIVADMPFLSYEIDTKSAIKNAGLLVKAGSDAIKLEGGEEMKDTVKAIVKAGIPVMGHIGLTPQRFLRLGGFRTIGKTKQEEDQLIKDSLELEDAGVFSLVIENTYVDIAKRITEKLNIPTICIGAGPYCDGQVLVINDLLGLSEFTPYFAKSYVNLKEIISNAINQYIIDVKNNKFPEKQHYKERES</sequence>
<proteinExistence type="inferred from homology"/>
<protein>
    <recommendedName>
        <fullName evidence="1">3-methyl-2-oxobutanoate hydroxymethyltransferase</fullName>
        <ecNumber evidence="1">2.1.2.11</ecNumber>
    </recommendedName>
    <alternativeName>
        <fullName evidence="1">Ketopantoate hydroxymethyltransferase</fullName>
        <shortName evidence="1">KPHMT</shortName>
    </alternativeName>
</protein>
<reference key="1">
    <citation type="journal article" date="2009" name="Proc. Natl. Acad. Sci. U.S.A.">
        <title>Biogeography of the Sulfolobus islandicus pan-genome.</title>
        <authorList>
            <person name="Reno M.L."/>
            <person name="Held N.L."/>
            <person name="Fields C.J."/>
            <person name="Burke P.V."/>
            <person name="Whitaker R.J."/>
        </authorList>
    </citation>
    <scope>NUCLEOTIDE SEQUENCE [LARGE SCALE GENOMIC DNA]</scope>
    <source>
        <strain>L.S.2.15 / Lassen #1</strain>
    </source>
</reference>
<feature type="chain" id="PRO_1000203479" description="3-methyl-2-oxobutanoate hydroxymethyltransferase">
    <location>
        <begin position="1"/>
        <end position="267"/>
    </location>
</feature>
<feature type="active site" description="Proton acceptor" evidence="1">
    <location>
        <position position="182"/>
    </location>
</feature>
<feature type="binding site" evidence="1">
    <location>
        <begin position="45"/>
        <end position="46"/>
    </location>
    <ligand>
        <name>3-methyl-2-oxobutanoate</name>
        <dbReference type="ChEBI" id="CHEBI:11851"/>
    </ligand>
</feature>
<feature type="binding site" evidence="1">
    <location>
        <position position="45"/>
    </location>
    <ligand>
        <name>Mg(2+)</name>
        <dbReference type="ChEBI" id="CHEBI:18420"/>
    </ligand>
</feature>
<feature type="binding site" evidence="1">
    <location>
        <position position="84"/>
    </location>
    <ligand>
        <name>3-methyl-2-oxobutanoate</name>
        <dbReference type="ChEBI" id="CHEBI:11851"/>
    </ligand>
</feature>
<feature type="binding site" evidence="1">
    <location>
        <position position="84"/>
    </location>
    <ligand>
        <name>Mg(2+)</name>
        <dbReference type="ChEBI" id="CHEBI:18420"/>
    </ligand>
</feature>
<feature type="binding site" evidence="1">
    <location>
        <position position="113"/>
    </location>
    <ligand>
        <name>3-methyl-2-oxobutanoate</name>
        <dbReference type="ChEBI" id="CHEBI:11851"/>
    </ligand>
</feature>
<feature type="binding site" evidence="1">
    <location>
        <position position="115"/>
    </location>
    <ligand>
        <name>Mg(2+)</name>
        <dbReference type="ChEBI" id="CHEBI:18420"/>
    </ligand>
</feature>
<name>PANB_SACI2</name>
<comment type="function">
    <text evidence="1">Catalyzes the reversible reaction in which hydroxymethyl group from 5,10-methylenetetrahydrofolate is transferred onto alpha-ketoisovalerate to form ketopantoate.</text>
</comment>
<comment type="catalytic activity">
    <reaction evidence="1">
        <text>3-methyl-2-oxobutanoate + (6R)-5,10-methylene-5,6,7,8-tetrahydrofolate + H2O = 2-dehydropantoate + (6S)-5,6,7,8-tetrahydrofolate</text>
        <dbReference type="Rhea" id="RHEA:11824"/>
        <dbReference type="ChEBI" id="CHEBI:11561"/>
        <dbReference type="ChEBI" id="CHEBI:11851"/>
        <dbReference type="ChEBI" id="CHEBI:15377"/>
        <dbReference type="ChEBI" id="CHEBI:15636"/>
        <dbReference type="ChEBI" id="CHEBI:57453"/>
        <dbReference type="EC" id="2.1.2.11"/>
    </reaction>
</comment>
<comment type="cofactor">
    <cofactor evidence="1">
        <name>Mg(2+)</name>
        <dbReference type="ChEBI" id="CHEBI:18420"/>
    </cofactor>
    <text evidence="1">Binds 1 Mg(2+) ion per subunit.</text>
</comment>
<comment type="pathway">
    <text evidence="1">Cofactor biosynthesis; coenzyme A biosynthesis.</text>
</comment>
<comment type="subunit">
    <text evidence="1">Homodecamer; pentamer of dimers.</text>
</comment>
<comment type="subcellular location">
    <subcellularLocation>
        <location evidence="1">Cytoplasm</location>
    </subcellularLocation>
</comment>
<comment type="similarity">
    <text evidence="1">Belongs to the PanB family.</text>
</comment>
<dbReference type="EC" id="2.1.2.11" evidence="1"/>
<dbReference type="EMBL" id="CP001399">
    <property type="protein sequence ID" value="ACP34377.1"/>
    <property type="molecule type" value="Genomic_DNA"/>
</dbReference>
<dbReference type="RefSeq" id="WP_012712860.1">
    <property type="nucleotide sequence ID" value="NC_012589.1"/>
</dbReference>
<dbReference type="SMR" id="C3MK79"/>
<dbReference type="GeneID" id="7797292"/>
<dbReference type="KEGG" id="sis:LS215_0222"/>
<dbReference type="HOGENOM" id="CLU_036645_1_0_2"/>
<dbReference type="OrthoDB" id="8414at2157"/>
<dbReference type="UniPathway" id="UPA00241"/>
<dbReference type="Proteomes" id="UP000001747">
    <property type="component" value="Chromosome"/>
</dbReference>
<dbReference type="GO" id="GO:0005737">
    <property type="term" value="C:cytoplasm"/>
    <property type="evidence" value="ECO:0007669"/>
    <property type="project" value="UniProtKB-SubCell"/>
</dbReference>
<dbReference type="GO" id="GO:0003864">
    <property type="term" value="F:3-methyl-2-oxobutanoate hydroxymethyltransferase activity"/>
    <property type="evidence" value="ECO:0007669"/>
    <property type="project" value="UniProtKB-UniRule"/>
</dbReference>
<dbReference type="GO" id="GO:0000287">
    <property type="term" value="F:magnesium ion binding"/>
    <property type="evidence" value="ECO:0007669"/>
    <property type="project" value="TreeGrafter"/>
</dbReference>
<dbReference type="GO" id="GO:0015937">
    <property type="term" value="P:coenzyme A biosynthetic process"/>
    <property type="evidence" value="ECO:0007669"/>
    <property type="project" value="UniProtKB-UniRule"/>
</dbReference>
<dbReference type="GO" id="GO:0015940">
    <property type="term" value="P:pantothenate biosynthetic process"/>
    <property type="evidence" value="ECO:0007669"/>
    <property type="project" value="InterPro"/>
</dbReference>
<dbReference type="CDD" id="cd06557">
    <property type="entry name" value="KPHMT-like"/>
    <property type="match status" value="1"/>
</dbReference>
<dbReference type="FunFam" id="3.20.20.60:FF:000052">
    <property type="entry name" value="3-methyl-2-oxobutanoate hydroxymethyltransferase"/>
    <property type="match status" value="1"/>
</dbReference>
<dbReference type="Gene3D" id="3.20.20.60">
    <property type="entry name" value="Phosphoenolpyruvate-binding domains"/>
    <property type="match status" value="1"/>
</dbReference>
<dbReference type="HAMAP" id="MF_00156">
    <property type="entry name" value="PanB"/>
    <property type="match status" value="1"/>
</dbReference>
<dbReference type="InterPro" id="IPR003700">
    <property type="entry name" value="Pantoate_hydroxy_MeTrfase"/>
</dbReference>
<dbReference type="InterPro" id="IPR015813">
    <property type="entry name" value="Pyrv/PenolPyrv_kinase-like_dom"/>
</dbReference>
<dbReference type="InterPro" id="IPR040442">
    <property type="entry name" value="Pyrv_kinase-like_dom_sf"/>
</dbReference>
<dbReference type="NCBIfam" id="TIGR00222">
    <property type="entry name" value="panB"/>
    <property type="match status" value="1"/>
</dbReference>
<dbReference type="NCBIfam" id="NF001452">
    <property type="entry name" value="PRK00311.1"/>
    <property type="match status" value="1"/>
</dbReference>
<dbReference type="PANTHER" id="PTHR20881">
    <property type="entry name" value="3-METHYL-2-OXOBUTANOATE HYDROXYMETHYLTRANSFERASE"/>
    <property type="match status" value="1"/>
</dbReference>
<dbReference type="PANTHER" id="PTHR20881:SF0">
    <property type="entry name" value="3-METHYL-2-OXOBUTANOATE HYDROXYMETHYLTRANSFERASE"/>
    <property type="match status" value="1"/>
</dbReference>
<dbReference type="Pfam" id="PF02548">
    <property type="entry name" value="Pantoate_transf"/>
    <property type="match status" value="1"/>
</dbReference>
<dbReference type="PIRSF" id="PIRSF000388">
    <property type="entry name" value="Pantoate_hydroxy_MeTrfase"/>
    <property type="match status" value="1"/>
</dbReference>
<dbReference type="SUPFAM" id="SSF51621">
    <property type="entry name" value="Phosphoenolpyruvate/pyruvate domain"/>
    <property type="match status" value="1"/>
</dbReference>
<organism>
    <name type="scientific">Saccharolobus islandicus (strain L.S.2.15 / Lassen #1)</name>
    <name type="common">Sulfolobus islandicus</name>
    <dbReference type="NCBI Taxonomy" id="429572"/>
    <lineage>
        <taxon>Archaea</taxon>
        <taxon>Thermoproteota</taxon>
        <taxon>Thermoprotei</taxon>
        <taxon>Sulfolobales</taxon>
        <taxon>Sulfolobaceae</taxon>
        <taxon>Saccharolobus</taxon>
    </lineage>
</organism>
<evidence type="ECO:0000255" key="1">
    <source>
        <dbReference type="HAMAP-Rule" id="MF_00156"/>
    </source>
</evidence>
<accession>C3MK79</accession>
<gene>
    <name evidence="1" type="primary">panB</name>
    <name type="ordered locus">LS215_0222</name>
</gene>
<keyword id="KW-0173">Coenzyme A biosynthesis</keyword>
<keyword id="KW-0963">Cytoplasm</keyword>
<keyword id="KW-0460">Magnesium</keyword>
<keyword id="KW-0479">Metal-binding</keyword>
<keyword id="KW-0808">Transferase</keyword>